<proteinExistence type="inferred from homology"/>
<evidence type="ECO:0000255" key="1">
    <source>
        <dbReference type="HAMAP-Rule" id="MF_01371"/>
    </source>
</evidence>
<evidence type="ECO:0000305" key="2"/>
<reference key="1">
    <citation type="journal article" date="2012" name="BMC Microbiol.">
        <title>Genome sequence of Desulfitobacterium hafniense DCB-2, a Gram-positive anaerobe capable of dehalogenation and metal reduction.</title>
        <authorList>
            <person name="Kim S.H."/>
            <person name="Harzman C."/>
            <person name="Davis J.K."/>
            <person name="Hutcheson R."/>
            <person name="Broderick J.B."/>
            <person name="Marsh T.L."/>
            <person name="Tiedje J.M."/>
        </authorList>
    </citation>
    <scope>NUCLEOTIDE SEQUENCE [LARGE SCALE GENOMIC DNA]</scope>
    <source>
        <strain>DSM 10664 / DCB-2</strain>
    </source>
</reference>
<comment type="subunit">
    <text evidence="1">Part of the 50S ribosomal subunit.</text>
</comment>
<comment type="similarity">
    <text evidence="1">Belongs to the universal ribosomal protein uL30 family.</text>
</comment>
<keyword id="KW-0687">Ribonucleoprotein</keyword>
<keyword id="KW-0689">Ribosomal protein</keyword>
<sequence>MKIKVTLVKSPIGYSENQRKVLKSLGLGKMGSSVVHDDTPNIQGMIRKCAHLVAVENVAE</sequence>
<feature type="chain" id="PRO_1000184139" description="Large ribosomal subunit protein uL30">
    <location>
        <begin position="1"/>
        <end position="60"/>
    </location>
</feature>
<dbReference type="EMBL" id="CP001336">
    <property type="protein sequence ID" value="ACL18507.1"/>
    <property type="molecule type" value="Genomic_DNA"/>
</dbReference>
<dbReference type="RefSeq" id="WP_014792401.1">
    <property type="nucleotide sequence ID" value="NC_011830.1"/>
</dbReference>
<dbReference type="SMR" id="B8G1Y4"/>
<dbReference type="KEGG" id="dhd:Dhaf_0440"/>
<dbReference type="HOGENOM" id="CLU_131047_2_1_9"/>
<dbReference type="Proteomes" id="UP000007726">
    <property type="component" value="Chromosome"/>
</dbReference>
<dbReference type="GO" id="GO:0022625">
    <property type="term" value="C:cytosolic large ribosomal subunit"/>
    <property type="evidence" value="ECO:0007669"/>
    <property type="project" value="TreeGrafter"/>
</dbReference>
<dbReference type="GO" id="GO:0003735">
    <property type="term" value="F:structural constituent of ribosome"/>
    <property type="evidence" value="ECO:0007669"/>
    <property type="project" value="InterPro"/>
</dbReference>
<dbReference type="GO" id="GO:0006412">
    <property type="term" value="P:translation"/>
    <property type="evidence" value="ECO:0007669"/>
    <property type="project" value="UniProtKB-UniRule"/>
</dbReference>
<dbReference type="CDD" id="cd01658">
    <property type="entry name" value="Ribosomal_L30"/>
    <property type="match status" value="1"/>
</dbReference>
<dbReference type="Gene3D" id="3.30.1390.20">
    <property type="entry name" value="Ribosomal protein L30, ferredoxin-like fold domain"/>
    <property type="match status" value="1"/>
</dbReference>
<dbReference type="HAMAP" id="MF_01371_B">
    <property type="entry name" value="Ribosomal_uL30_B"/>
    <property type="match status" value="1"/>
</dbReference>
<dbReference type="InterPro" id="IPR036919">
    <property type="entry name" value="Ribo_uL30_ferredoxin-like_sf"/>
</dbReference>
<dbReference type="InterPro" id="IPR005996">
    <property type="entry name" value="Ribosomal_uL30_bac-type"/>
</dbReference>
<dbReference type="InterPro" id="IPR016082">
    <property type="entry name" value="Ribosomal_uL30_ferredoxin-like"/>
</dbReference>
<dbReference type="NCBIfam" id="TIGR01308">
    <property type="entry name" value="rpmD_bact"/>
    <property type="match status" value="1"/>
</dbReference>
<dbReference type="PANTHER" id="PTHR15892:SF2">
    <property type="entry name" value="LARGE RIBOSOMAL SUBUNIT PROTEIN UL30M"/>
    <property type="match status" value="1"/>
</dbReference>
<dbReference type="PANTHER" id="PTHR15892">
    <property type="entry name" value="MITOCHONDRIAL RIBOSOMAL PROTEIN L30"/>
    <property type="match status" value="1"/>
</dbReference>
<dbReference type="Pfam" id="PF00327">
    <property type="entry name" value="Ribosomal_L30"/>
    <property type="match status" value="1"/>
</dbReference>
<dbReference type="PIRSF" id="PIRSF002211">
    <property type="entry name" value="Ribosomal_L30_bac-type"/>
    <property type="match status" value="1"/>
</dbReference>
<dbReference type="SUPFAM" id="SSF55129">
    <property type="entry name" value="Ribosomal protein L30p/L7e"/>
    <property type="match status" value="1"/>
</dbReference>
<protein>
    <recommendedName>
        <fullName evidence="1">Large ribosomal subunit protein uL30</fullName>
    </recommendedName>
    <alternativeName>
        <fullName evidence="2">50S ribosomal protein L30</fullName>
    </alternativeName>
</protein>
<organism>
    <name type="scientific">Desulfitobacterium hafniense (strain DSM 10664 / DCB-2)</name>
    <dbReference type="NCBI Taxonomy" id="272564"/>
    <lineage>
        <taxon>Bacteria</taxon>
        <taxon>Bacillati</taxon>
        <taxon>Bacillota</taxon>
        <taxon>Clostridia</taxon>
        <taxon>Eubacteriales</taxon>
        <taxon>Desulfitobacteriaceae</taxon>
        <taxon>Desulfitobacterium</taxon>
    </lineage>
</organism>
<accession>B8G1Y4</accession>
<name>RL30_DESHD</name>
<gene>
    <name evidence="1" type="primary">rpmD</name>
    <name type="ordered locus">Dhaf_0440</name>
</gene>